<organism>
    <name type="scientific">Buchnera aphidicola subsp. Acyrthosiphon pisum (strain 5A)</name>
    <dbReference type="NCBI Taxonomy" id="563178"/>
    <lineage>
        <taxon>Bacteria</taxon>
        <taxon>Pseudomonadati</taxon>
        <taxon>Pseudomonadota</taxon>
        <taxon>Gammaproteobacteria</taxon>
        <taxon>Enterobacterales</taxon>
        <taxon>Erwiniaceae</taxon>
        <taxon>Buchnera</taxon>
    </lineage>
</organism>
<feature type="chain" id="PRO_1000196694" description="S-adenosylmethionine synthase">
    <location>
        <begin position="1"/>
        <end position="378"/>
    </location>
</feature>
<feature type="region of interest" description="Flexible loop" evidence="1">
    <location>
        <begin position="99"/>
        <end position="109"/>
    </location>
</feature>
<feature type="binding site" description="in other chain" evidence="1">
    <location>
        <position position="15"/>
    </location>
    <ligand>
        <name>ATP</name>
        <dbReference type="ChEBI" id="CHEBI:30616"/>
        <note>ligand shared between two neighboring subunits</note>
    </ligand>
</feature>
<feature type="binding site" evidence="1">
    <location>
        <position position="17"/>
    </location>
    <ligand>
        <name>Mg(2+)</name>
        <dbReference type="ChEBI" id="CHEBI:18420"/>
    </ligand>
</feature>
<feature type="binding site" evidence="1">
    <location>
        <position position="43"/>
    </location>
    <ligand>
        <name>K(+)</name>
        <dbReference type="ChEBI" id="CHEBI:29103"/>
    </ligand>
</feature>
<feature type="binding site" description="in other chain" evidence="1">
    <location>
        <position position="56"/>
    </location>
    <ligand>
        <name>L-methionine</name>
        <dbReference type="ChEBI" id="CHEBI:57844"/>
        <note>ligand shared between two neighboring subunits</note>
    </ligand>
</feature>
<feature type="binding site" description="in other chain" evidence="1">
    <location>
        <position position="99"/>
    </location>
    <ligand>
        <name>L-methionine</name>
        <dbReference type="ChEBI" id="CHEBI:57844"/>
        <note>ligand shared between two neighboring subunits</note>
    </ligand>
</feature>
<feature type="binding site" description="in other chain" evidence="1">
    <location>
        <begin position="164"/>
        <end position="166"/>
    </location>
    <ligand>
        <name>ATP</name>
        <dbReference type="ChEBI" id="CHEBI:30616"/>
        <note>ligand shared between two neighboring subunits</note>
    </ligand>
</feature>
<feature type="binding site" description="in other chain" evidence="1">
    <location>
        <begin position="230"/>
        <end position="231"/>
    </location>
    <ligand>
        <name>ATP</name>
        <dbReference type="ChEBI" id="CHEBI:30616"/>
        <note>ligand shared between two neighboring subunits</note>
    </ligand>
</feature>
<feature type="binding site" evidence="1">
    <location>
        <position position="239"/>
    </location>
    <ligand>
        <name>ATP</name>
        <dbReference type="ChEBI" id="CHEBI:30616"/>
        <note>ligand shared between two neighboring subunits</note>
    </ligand>
</feature>
<feature type="binding site" evidence="1">
    <location>
        <position position="239"/>
    </location>
    <ligand>
        <name>L-methionine</name>
        <dbReference type="ChEBI" id="CHEBI:57844"/>
        <note>ligand shared between two neighboring subunits</note>
    </ligand>
</feature>
<feature type="binding site" description="in other chain" evidence="1">
    <location>
        <begin position="245"/>
        <end position="246"/>
    </location>
    <ligand>
        <name>ATP</name>
        <dbReference type="ChEBI" id="CHEBI:30616"/>
        <note>ligand shared between two neighboring subunits</note>
    </ligand>
</feature>
<feature type="binding site" evidence="1">
    <location>
        <position position="262"/>
    </location>
    <ligand>
        <name>ATP</name>
        <dbReference type="ChEBI" id="CHEBI:30616"/>
        <note>ligand shared between two neighboring subunits</note>
    </ligand>
</feature>
<feature type="binding site" evidence="1">
    <location>
        <position position="266"/>
    </location>
    <ligand>
        <name>ATP</name>
        <dbReference type="ChEBI" id="CHEBI:30616"/>
        <note>ligand shared between two neighboring subunits</note>
    </ligand>
</feature>
<feature type="binding site" description="in other chain" evidence="1">
    <location>
        <position position="270"/>
    </location>
    <ligand>
        <name>L-methionine</name>
        <dbReference type="ChEBI" id="CHEBI:57844"/>
        <note>ligand shared between two neighboring subunits</note>
    </ligand>
</feature>
<reference key="1">
    <citation type="journal article" date="2009" name="Science">
        <title>The dynamics and time scale of ongoing genomic erosion in symbiotic bacteria.</title>
        <authorList>
            <person name="Moran N.A."/>
            <person name="McLaughlin H.J."/>
            <person name="Sorek R."/>
        </authorList>
    </citation>
    <scope>NUCLEOTIDE SEQUENCE [LARGE SCALE GENOMIC DNA]</scope>
    <source>
        <strain>5A</strain>
    </source>
</reference>
<protein>
    <recommendedName>
        <fullName evidence="1">S-adenosylmethionine synthase</fullName>
        <shortName evidence="1">AdoMet synthase</shortName>
        <ecNumber evidence="1">2.5.1.6</ecNumber>
    </recommendedName>
    <alternativeName>
        <fullName evidence="1">MAT</fullName>
    </alternativeName>
    <alternativeName>
        <fullName evidence="1">Methionine adenosyltransferase</fullName>
    </alternativeName>
</protein>
<dbReference type="EC" id="2.5.1.6" evidence="1"/>
<dbReference type="EMBL" id="CP001161">
    <property type="protein sequence ID" value="ACL30760.1"/>
    <property type="molecule type" value="Genomic_DNA"/>
</dbReference>
<dbReference type="RefSeq" id="WP_009874364.1">
    <property type="nucleotide sequence ID" value="NC_011833.1"/>
</dbReference>
<dbReference type="SMR" id="B8D9I9"/>
<dbReference type="KEGG" id="bap:BUAP5A_401"/>
<dbReference type="HOGENOM" id="CLU_041802_1_1_6"/>
<dbReference type="OrthoDB" id="9801686at2"/>
<dbReference type="UniPathway" id="UPA00315">
    <property type="reaction ID" value="UER00080"/>
</dbReference>
<dbReference type="Proteomes" id="UP000006904">
    <property type="component" value="Chromosome"/>
</dbReference>
<dbReference type="GO" id="GO:0005737">
    <property type="term" value="C:cytoplasm"/>
    <property type="evidence" value="ECO:0007669"/>
    <property type="project" value="UniProtKB-SubCell"/>
</dbReference>
<dbReference type="GO" id="GO:0005524">
    <property type="term" value="F:ATP binding"/>
    <property type="evidence" value="ECO:0007669"/>
    <property type="project" value="UniProtKB-UniRule"/>
</dbReference>
<dbReference type="GO" id="GO:0000287">
    <property type="term" value="F:magnesium ion binding"/>
    <property type="evidence" value="ECO:0007669"/>
    <property type="project" value="UniProtKB-UniRule"/>
</dbReference>
<dbReference type="GO" id="GO:0004478">
    <property type="term" value="F:methionine adenosyltransferase activity"/>
    <property type="evidence" value="ECO:0007669"/>
    <property type="project" value="UniProtKB-UniRule"/>
</dbReference>
<dbReference type="GO" id="GO:0006730">
    <property type="term" value="P:one-carbon metabolic process"/>
    <property type="evidence" value="ECO:0007669"/>
    <property type="project" value="UniProtKB-KW"/>
</dbReference>
<dbReference type="GO" id="GO:0006556">
    <property type="term" value="P:S-adenosylmethionine biosynthetic process"/>
    <property type="evidence" value="ECO:0007669"/>
    <property type="project" value="UniProtKB-UniRule"/>
</dbReference>
<dbReference type="CDD" id="cd18079">
    <property type="entry name" value="S-AdoMet_synt"/>
    <property type="match status" value="1"/>
</dbReference>
<dbReference type="FunFam" id="3.30.300.10:FF:000003">
    <property type="entry name" value="S-adenosylmethionine synthase"/>
    <property type="match status" value="1"/>
</dbReference>
<dbReference type="Gene3D" id="3.30.300.10">
    <property type="match status" value="3"/>
</dbReference>
<dbReference type="HAMAP" id="MF_00086">
    <property type="entry name" value="S_AdoMet_synth1"/>
    <property type="match status" value="1"/>
</dbReference>
<dbReference type="InterPro" id="IPR022631">
    <property type="entry name" value="ADOMET_SYNTHASE_CS"/>
</dbReference>
<dbReference type="InterPro" id="IPR022630">
    <property type="entry name" value="S-AdoMet_synt_C"/>
</dbReference>
<dbReference type="InterPro" id="IPR022629">
    <property type="entry name" value="S-AdoMet_synt_central"/>
</dbReference>
<dbReference type="InterPro" id="IPR022628">
    <property type="entry name" value="S-AdoMet_synt_N"/>
</dbReference>
<dbReference type="InterPro" id="IPR002133">
    <property type="entry name" value="S-AdoMet_synthetase"/>
</dbReference>
<dbReference type="InterPro" id="IPR022636">
    <property type="entry name" value="S-AdoMet_synthetase_sfam"/>
</dbReference>
<dbReference type="NCBIfam" id="TIGR01034">
    <property type="entry name" value="metK"/>
    <property type="match status" value="1"/>
</dbReference>
<dbReference type="PANTHER" id="PTHR11964">
    <property type="entry name" value="S-ADENOSYLMETHIONINE SYNTHETASE"/>
    <property type="match status" value="1"/>
</dbReference>
<dbReference type="Pfam" id="PF02773">
    <property type="entry name" value="S-AdoMet_synt_C"/>
    <property type="match status" value="1"/>
</dbReference>
<dbReference type="Pfam" id="PF02772">
    <property type="entry name" value="S-AdoMet_synt_M"/>
    <property type="match status" value="1"/>
</dbReference>
<dbReference type="Pfam" id="PF00438">
    <property type="entry name" value="S-AdoMet_synt_N"/>
    <property type="match status" value="1"/>
</dbReference>
<dbReference type="PIRSF" id="PIRSF000497">
    <property type="entry name" value="MAT"/>
    <property type="match status" value="1"/>
</dbReference>
<dbReference type="SUPFAM" id="SSF55973">
    <property type="entry name" value="S-adenosylmethionine synthetase"/>
    <property type="match status" value="3"/>
</dbReference>
<dbReference type="PROSITE" id="PS00376">
    <property type="entry name" value="ADOMET_SYNTHASE_1"/>
    <property type="match status" value="1"/>
</dbReference>
<dbReference type="PROSITE" id="PS00377">
    <property type="entry name" value="ADOMET_SYNTHASE_2"/>
    <property type="match status" value="1"/>
</dbReference>
<keyword id="KW-0067">ATP-binding</keyword>
<keyword id="KW-0963">Cytoplasm</keyword>
<keyword id="KW-0460">Magnesium</keyword>
<keyword id="KW-0479">Metal-binding</keyword>
<keyword id="KW-0547">Nucleotide-binding</keyword>
<keyword id="KW-0554">One-carbon metabolism</keyword>
<keyword id="KW-0630">Potassium</keyword>
<keyword id="KW-0808">Transferase</keyword>
<evidence type="ECO:0000255" key="1">
    <source>
        <dbReference type="HAMAP-Rule" id="MF_00086"/>
    </source>
</evidence>
<name>METK_BUCA5</name>
<sequence>MTEYLFTSESVSEGHPDKIADQISDALLDEILKQDLKARVACETYVKTGMVLIGGEITTTAWVDVEEITRKTINDIGYVNSDAGFDANSCAVLSAIGKQSPDINQGINRFDPLKQGAGDQGIIFGYATNETEFFMPAPITYAHLLMQKQSELRKKNILPWLRPDAKSQVTFKYNNGNIIAIDTVVLSTQHQENITQKYLKEAVMDEIIKPVLPDKWLTKNTKFFINPTGRFVIGGPMGDCGVTGRKIIVDTYGGMSRHGGGAFSGKDPSKVDRSAAYAARYVAKNIVASGLAARCEIQLSYAIGIAEPISIMIDTFNTGKISNSALISLVRSIFDLRPYGLIKMLNLLQPIYLKTAVYGHFGRKEFPWENLDKVNELS</sequence>
<accession>B8D9I9</accession>
<gene>
    <name evidence="1" type="primary">metK</name>
    <name type="ordered locus">BUAP5A_401</name>
</gene>
<proteinExistence type="inferred from homology"/>
<comment type="function">
    <text evidence="1">Catalyzes the formation of S-adenosylmethionine (AdoMet) from methionine and ATP. The overall synthetic reaction is composed of two sequential steps, AdoMet formation and the subsequent tripolyphosphate hydrolysis which occurs prior to release of AdoMet from the enzyme.</text>
</comment>
<comment type="catalytic activity">
    <reaction evidence="1">
        <text>L-methionine + ATP + H2O = S-adenosyl-L-methionine + phosphate + diphosphate</text>
        <dbReference type="Rhea" id="RHEA:21080"/>
        <dbReference type="ChEBI" id="CHEBI:15377"/>
        <dbReference type="ChEBI" id="CHEBI:30616"/>
        <dbReference type="ChEBI" id="CHEBI:33019"/>
        <dbReference type="ChEBI" id="CHEBI:43474"/>
        <dbReference type="ChEBI" id="CHEBI:57844"/>
        <dbReference type="ChEBI" id="CHEBI:59789"/>
        <dbReference type="EC" id="2.5.1.6"/>
    </reaction>
</comment>
<comment type="cofactor">
    <cofactor evidence="1">
        <name>Mg(2+)</name>
        <dbReference type="ChEBI" id="CHEBI:18420"/>
    </cofactor>
    <text evidence="1">Binds 2 divalent ions per subunit.</text>
</comment>
<comment type="cofactor">
    <cofactor evidence="1">
        <name>K(+)</name>
        <dbReference type="ChEBI" id="CHEBI:29103"/>
    </cofactor>
    <text evidence="1">Binds 1 potassium ion per subunit.</text>
</comment>
<comment type="pathway">
    <text evidence="1">Amino-acid biosynthesis; S-adenosyl-L-methionine biosynthesis; S-adenosyl-L-methionine from L-methionine: step 1/1.</text>
</comment>
<comment type="subunit">
    <text evidence="1">Homotetramer; dimer of dimers.</text>
</comment>
<comment type="subcellular location">
    <subcellularLocation>
        <location evidence="1">Cytoplasm</location>
    </subcellularLocation>
</comment>
<comment type="similarity">
    <text evidence="1">Belongs to the AdoMet synthase family.</text>
</comment>